<sequence>MGSKGVYQYHWQSHNVKHSGVDDMVLLSKITENSIVENLKKRYMDDYIFTYIGSVLISVNPFKQMPYFGEKEIEMYQGAAQYENPPHIYALADNMYRNMIIDRENQCVIISGESGAGKTVAAKYIMSYISRVSGGGTKVQHVKDIILQSNPLLEAFGNAKTVRNNNSSRFGKYFEIQFSPGGEPDGGKISNFLLEKSRVVMRNPGERSFHIFYQLIEGASAEQKHSLGITSMDYYYYLSLSGSYKVDDIDDRREFQETLHAMNVIGIFAEEQTLVLQIVAGILHLGNISFKEVGNYAAVESEEFLAFPAYLLGINQDRLKEKLTSRQMDSKWGGKSESIHVTLNVEQACYTRDALAKALHARVFDFLVDSINKAMEKDHEEYNIGVLDIYGFEIFQKNGFEQFCINFVNEKLQQIFIELTLKAEQEEYVQEGIRWTPIEYFNNKIVCDLIENKVNPPGIMSILDDVCATMHAVGEGADQTLLQKLQMQIGSHEHFNSWNQGFIIHHYAGKVSYDMDGFCERNRDVLFMDLIELMQSSELPFIKSLFPENLQADKKGRPTTAGSKIKKQANDLVSTLMKCTPHYIRCIKPNETKKPRDWEESRVKHQVEYLGLKENIRVRRAGYAYRRIFQKFLQRYAILTKATWPSWQGEEKQGVLHLLQSVNMDSDQFQLGRSKVFIKAPESLFLLEEMRERKYDGYARVIQKSWRKFVARKKYVQMREEASDLLLNKKERRRNSINRNFIGDYIGMEEHPELQQFVGKREKIDFADTVTKYDRRFKGVKRDLLLTPKCLYLIGREKVKQGPDKGLVKEVLKRKIEIERILSVSLSTMQDDIFILHEQEYDSLLESVFKTEFLSLLAKRYEEKTQKQLPLKFSNTLELKLKKENWGPWSAGGSRQVQFHQGFGDLAVLKPSNKVLQVSIGPGLPKNSRPTRRNTTQNTGYSSGTQNANYPVRAAPPPPGYHQNGVIRNQYVPYPHAPGSQRSNQKSLYTSMARPPLPRQQSTSSDRVSQTPESLDFLKVPDQGAAGVRRQTTSRPPPAGGRPKPQPKPKPQVPQCKALYAYDAQDTDELSFNANDIIDIIKEDPSGWWTGRLRGKQGLFPNNYVTKI</sequence>
<accession>Q12965</accession>
<accession>Q14778</accession>
<proteinExistence type="evidence at protein level"/>
<evidence type="ECO:0000250" key="1"/>
<evidence type="ECO:0000250" key="2">
    <source>
        <dbReference type="UniProtKB" id="E9Q634"/>
    </source>
</evidence>
<evidence type="ECO:0000255" key="3"/>
<evidence type="ECO:0000255" key="4">
    <source>
        <dbReference type="PROSITE-ProRule" id="PRU00116"/>
    </source>
</evidence>
<evidence type="ECO:0000255" key="5">
    <source>
        <dbReference type="PROSITE-ProRule" id="PRU00192"/>
    </source>
</evidence>
<evidence type="ECO:0000255" key="6">
    <source>
        <dbReference type="PROSITE-ProRule" id="PRU00782"/>
    </source>
</evidence>
<evidence type="ECO:0000255" key="7">
    <source>
        <dbReference type="PROSITE-ProRule" id="PRU01093"/>
    </source>
</evidence>
<evidence type="ECO:0000256" key="8">
    <source>
        <dbReference type="SAM" id="MobiDB-lite"/>
    </source>
</evidence>
<evidence type="ECO:0000269" key="9">
    <source>
    </source>
</evidence>
<evidence type="ECO:0000269" key="10">
    <source>
    </source>
</evidence>
<evidence type="ECO:0000269" key="11">
    <source>
    </source>
</evidence>
<evidence type="ECO:0000269" key="12">
    <source>
    </source>
</evidence>
<evidence type="ECO:0000269" key="13">
    <source>
    </source>
</evidence>
<evidence type="ECO:0000269" key="14">
    <source>
    </source>
</evidence>
<evidence type="ECO:0000269" key="15">
    <source>
    </source>
</evidence>
<evidence type="ECO:0000269" key="16">
    <source>
    </source>
</evidence>
<evidence type="ECO:0000269" key="17">
    <source>
    </source>
</evidence>
<evidence type="ECO:0000269" key="18">
    <source>
    </source>
</evidence>
<evidence type="ECO:0000269" key="19">
    <source>
    </source>
</evidence>
<evidence type="ECO:0000305" key="20"/>
<evidence type="ECO:0007744" key="21">
    <source>
    </source>
</evidence>
<evidence type="ECO:0007744" key="22">
    <source>
    </source>
</evidence>
<evidence type="ECO:0007744" key="23">
    <source>
    </source>
</evidence>
<protein>
    <recommendedName>
        <fullName>Unconventional myosin-Ie</fullName>
    </recommendedName>
    <alternativeName>
        <fullName>Myosin-Ic</fullName>
    </alternativeName>
    <alternativeName>
        <fullName>Unconventional myosin 1E</fullName>
    </alternativeName>
</protein>
<gene>
    <name type="primary">MYO1E</name>
    <name type="synonym">MYO1C</name>
</gene>
<reference key="1">
    <citation type="journal article" date="1994" name="J. Mol. Biol.">
        <title>Cloning and mRNA expression of human unconventional myosin-IC. A homologue of amoeboid myosins-I with a single IQ motif and an SH3 domain.</title>
        <authorList>
            <person name="Bement W.M."/>
            <person name="Wirth J.A."/>
            <person name="Mooseker M.S."/>
        </authorList>
    </citation>
    <scope>NUCLEOTIDE SEQUENCE [MRNA]</scope>
</reference>
<reference key="2">
    <citation type="journal article" date="2006" name="Nature">
        <title>Analysis of the DNA sequence and duplication history of human chromosome 15.</title>
        <authorList>
            <person name="Zody M.C."/>
            <person name="Garber M."/>
            <person name="Sharpe T."/>
            <person name="Young S.K."/>
            <person name="Rowen L."/>
            <person name="O'Neill K."/>
            <person name="Whittaker C.A."/>
            <person name="Kamal M."/>
            <person name="Chang J.L."/>
            <person name="Cuomo C.A."/>
            <person name="Dewar K."/>
            <person name="FitzGerald M.G."/>
            <person name="Kodira C.D."/>
            <person name="Madan A."/>
            <person name="Qin S."/>
            <person name="Yang X."/>
            <person name="Abbasi N."/>
            <person name="Abouelleil A."/>
            <person name="Arachchi H.M."/>
            <person name="Baradarani L."/>
            <person name="Birditt B."/>
            <person name="Bloom S."/>
            <person name="Bloom T."/>
            <person name="Borowsky M.L."/>
            <person name="Burke J."/>
            <person name="Butler J."/>
            <person name="Cook A."/>
            <person name="DeArellano K."/>
            <person name="DeCaprio D."/>
            <person name="Dorris L. III"/>
            <person name="Dors M."/>
            <person name="Eichler E.E."/>
            <person name="Engels R."/>
            <person name="Fahey J."/>
            <person name="Fleetwood P."/>
            <person name="Friedman C."/>
            <person name="Gearin G."/>
            <person name="Hall J.L."/>
            <person name="Hensley G."/>
            <person name="Johnson E."/>
            <person name="Jones C."/>
            <person name="Kamat A."/>
            <person name="Kaur A."/>
            <person name="Locke D.P."/>
            <person name="Madan A."/>
            <person name="Munson G."/>
            <person name="Jaffe D.B."/>
            <person name="Lui A."/>
            <person name="Macdonald P."/>
            <person name="Mauceli E."/>
            <person name="Naylor J.W."/>
            <person name="Nesbitt R."/>
            <person name="Nicol R."/>
            <person name="O'Leary S.B."/>
            <person name="Ratcliffe A."/>
            <person name="Rounsley S."/>
            <person name="She X."/>
            <person name="Sneddon K.M.B."/>
            <person name="Stewart S."/>
            <person name="Sougnez C."/>
            <person name="Stone S.M."/>
            <person name="Topham K."/>
            <person name="Vincent D."/>
            <person name="Wang S."/>
            <person name="Zimmer A.R."/>
            <person name="Birren B.W."/>
            <person name="Hood L."/>
            <person name="Lander E.S."/>
            <person name="Nusbaum C."/>
        </authorList>
    </citation>
    <scope>NUCLEOTIDE SEQUENCE [LARGE SCALE GENOMIC DNA]</scope>
</reference>
<reference key="3">
    <citation type="journal article" date="1994" name="Proc. Natl. Acad. Sci. U.S.A.">
        <title>Identification and overlapping expression of multiple unconventional myosin genes in vertebrate cell types.</title>
        <authorList>
            <person name="Bement W.M."/>
            <person name="Hasson T."/>
            <person name="Wirth J.A."/>
            <person name="Cheney R.E."/>
            <person name="Mooseker M.S."/>
        </authorList>
    </citation>
    <scope>NUCLEOTIDE SEQUENCE [MRNA] OF 107-196</scope>
</reference>
<reference key="4">
    <citation type="journal article" date="1994" name="Proc. Natl. Acad. Sci. U.S.A.">
        <authorList>
            <person name="Bement W.M."/>
            <person name="Hasson T."/>
            <person name="Wirth J.A."/>
            <person name="Cheney R.E."/>
            <person name="Mooseker M.S."/>
        </authorList>
    </citation>
    <scope>ERRATUM OF PUBMED:8022818</scope>
</reference>
<reference key="5">
    <citation type="journal article" date="2002" name="J. Biol. Chem.">
        <title>The kinetic mechanism of Myo1e (human myosin-IC).</title>
        <authorList>
            <person name="El Mezgueldi M."/>
            <person name="Tang N."/>
            <person name="Rosenfeld S.S."/>
            <person name="Ostap E.M."/>
        </authorList>
    </citation>
    <scope>FUNCTION IN ATP HYDROLYSIS</scope>
    <scope>INTERACTION WITH F-ACTIN AND CALM</scope>
</reference>
<reference key="6">
    <citation type="journal article" date="2007" name="FEBS Lett.">
        <title>Myosin 1E interacts with synaptojanin-1 and dynamin and is involved in endocytosis.</title>
        <authorList>
            <person name="Krendel M."/>
            <person name="Osterweil E.K."/>
            <person name="Mooseker M.S."/>
        </authorList>
    </citation>
    <scope>FUNCTION</scope>
    <scope>SUBCELLULAR LOCATION</scope>
    <scope>INTERACTION WITH SYNJ1; DNM1 AND DNM2</scope>
</reference>
<reference key="7">
    <citation type="journal article" date="2008" name="Proc. Natl. Acad. Sci. U.S.A.">
        <title>A quantitative atlas of mitotic phosphorylation.</title>
        <authorList>
            <person name="Dephoure N."/>
            <person name="Zhou C."/>
            <person name="Villen J."/>
            <person name="Beausoleil S.A."/>
            <person name="Bakalarski C.E."/>
            <person name="Elledge S.J."/>
            <person name="Gygi S.P."/>
        </authorList>
    </citation>
    <scope>PHOSPHORYLATION [LARGE SCALE ANALYSIS] AT SER-980 AND SER-1002</scope>
    <scope>IDENTIFICATION BY MASS SPECTROMETRY [LARGE SCALE ANALYSIS]</scope>
    <source>
        <tissue>Cervix carcinoma</tissue>
    </source>
</reference>
<reference key="8">
    <citation type="journal article" date="2009" name="Mol. Biol. Cell">
        <title>Distinct roles for CARMIL isoforms in cell migration.</title>
        <authorList>
            <person name="Liang Y."/>
            <person name="Niederstrasser H."/>
            <person name="Edwards M."/>
            <person name="Jackson C.E."/>
            <person name="Cooper J.A."/>
        </authorList>
    </citation>
    <scope>INTERACTION WITH CARMIL1</scope>
</reference>
<reference key="9">
    <citation type="journal article" date="2010" name="Biochemistry">
        <title>Myo1e binds anionic phospholipids with high affinity.</title>
        <authorList>
            <person name="Feeser E.A."/>
            <person name="Ignacio C.M."/>
            <person name="Krendel M."/>
            <person name="Ostap E.M."/>
        </authorList>
    </citation>
    <scope>FUNCTION</scope>
    <scope>SUBCELLULAR LOCATION</scope>
</reference>
<reference key="10">
    <citation type="journal article" date="2010" name="Sci. Signal.">
        <title>Quantitative phosphoproteomics reveals widespread full phosphorylation site occupancy during mitosis.</title>
        <authorList>
            <person name="Olsen J.V."/>
            <person name="Vermeulen M."/>
            <person name="Santamaria A."/>
            <person name="Kumar C."/>
            <person name="Miller M.L."/>
            <person name="Jensen L.J."/>
            <person name="Gnad F."/>
            <person name="Cox J."/>
            <person name="Jensen T.S."/>
            <person name="Nigg E.A."/>
            <person name="Brunak S."/>
            <person name="Mann M."/>
        </authorList>
    </citation>
    <scope>PHOSPHORYLATION [LARGE SCALE ANALYSIS] AT SER-980</scope>
    <scope>IDENTIFICATION BY MASS SPECTROMETRY [LARGE SCALE ANALYSIS]</scope>
    <source>
        <tissue>Cervix carcinoma</tissue>
    </source>
</reference>
<reference key="11">
    <citation type="journal article" date="2011" name="BMC Syst. Biol.">
        <title>Initial characterization of the human central proteome.</title>
        <authorList>
            <person name="Burkard T.R."/>
            <person name="Planyavsky M."/>
            <person name="Kaupe I."/>
            <person name="Breitwieser F.P."/>
            <person name="Buerckstuemmer T."/>
            <person name="Bennett K.L."/>
            <person name="Superti-Furga G."/>
            <person name="Colinge J."/>
        </authorList>
    </citation>
    <scope>IDENTIFICATION BY MASS SPECTROMETRY [LARGE SCALE ANALYSIS]</scope>
</reference>
<reference key="12">
    <citation type="journal article" date="2011" name="Cell">
        <title>A Genome-wide multidimensional RNAi screen reveals pathways controlling MHC class II antigen presentation.</title>
        <authorList>
            <person name="Paul P."/>
            <person name="van den Hoorn T."/>
            <person name="Jongsma M.L."/>
            <person name="Bakker M.J."/>
            <person name="Hengeveld R."/>
            <person name="Janssen L."/>
            <person name="Cresswell P."/>
            <person name="Egan D.A."/>
            <person name="van Ham M."/>
            <person name="Ten Brinke A."/>
            <person name="Ovaa H."/>
            <person name="Beijersbergen R.L."/>
            <person name="Kuijl C."/>
            <person name="Neefjes J."/>
        </authorList>
    </citation>
    <scope>INTERACTION WITH ARL14EP</scope>
    <scope>TISSUE SPECIFICITY</scope>
</reference>
<reference key="13">
    <citation type="journal article" date="2011" name="N. Engl. J. Med.">
        <title>MYO1E mutations and childhood familial focal segmental glomerulosclerosis.</title>
        <authorList>
            <person name="Mele C."/>
            <person name="Iatropoulos P."/>
            <person name="Donadelli R."/>
            <person name="Calabria A."/>
            <person name="Maranta R."/>
            <person name="Cassis P."/>
            <person name="Buelli S."/>
            <person name="Tomasoni S."/>
            <person name="Piras R."/>
            <person name="Krendel M."/>
            <person name="Bettoni S."/>
            <person name="Morigi M."/>
            <person name="Delledonne M."/>
            <person name="Pecoraro C."/>
            <person name="Abbate I."/>
            <person name="Capobianchi M.R."/>
            <person name="Hildebrandt F."/>
            <person name="Otto E."/>
            <person name="Schaefer F."/>
            <person name="Macciardi F."/>
            <person name="Ozaltin F."/>
            <person name="Emre S."/>
            <person name="Ibsirlioglu T."/>
            <person name="Benigni A."/>
            <person name="Remuzzi G."/>
            <person name="Noris M."/>
        </authorList>
    </citation>
    <scope>TISSUE SPECIFICITY</scope>
    <scope>SUBCELLULAR LOCATION</scope>
    <scope>VARIANT FSGS6 PRO-159</scope>
    <scope>VARIANTS GLY-185; VAL-221; ARG-795 AND HIS-1049</scope>
    <scope>CHARACTERIZATION OF VARIANT FSGS6 PRO-159</scope>
</reference>
<reference key="14">
    <citation type="journal article" date="2013" name="J. Proteome Res.">
        <title>Toward a comprehensive characterization of a human cancer cell phosphoproteome.</title>
        <authorList>
            <person name="Zhou H."/>
            <person name="Di Palma S."/>
            <person name="Preisinger C."/>
            <person name="Peng M."/>
            <person name="Polat A.N."/>
            <person name="Heck A.J."/>
            <person name="Mohammed S."/>
        </authorList>
    </citation>
    <scope>PHOSPHORYLATION [LARGE SCALE ANALYSIS] AT SER-980</scope>
    <scope>IDENTIFICATION BY MASS SPECTROMETRY [LARGE SCALE ANALYSIS]</scope>
    <source>
        <tissue>Cervix carcinoma</tissue>
    </source>
</reference>
<reference key="15">
    <citation type="journal article" date="2011" name="Kidney Int.">
        <title>Exome sequencing identified MYO1E and NEIL1 as candidate genes for human autosomal recessive steroid-resistant nephrotic syndrome.</title>
        <authorList>
            <person name="Sanna-Cherchi S."/>
            <person name="Burgess K.E."/>
            <person name="Nees S.N."/>
            <person name="Caridi G."/>
            <person name="Weng P.L."/>
            <person name="Dagnino M."/>
            <person name="Bodria M."/>
            <person name="Carrea A."/>
            <person name="Allegretta M.A."/>
            <person name="Kim H.R."/>
            <person name="Perry B.J."/>
            <person name="Gigante M."/>
            <person name="Clark L.N."/>
            <person name="Kisselev S."/>
            <person name="Cusi D."/>
            <person name="Gesualdo L."/>
            <person name="Allegri L."/>
            <person name="Scolari F."/>
            <person name="D'Agati V."/>
            <person name="Shapiro L.S."/>
            <person name="Pecoraro C."/>
            <person name="Palomero T."/>
            <person name="Ghiggeri G.M."/>
            <person name="Gharavi A.G."/>
        </authorList>
    </citation>
    <scope>VARIANT FSGS6 PRO-159</scope>
</reference>
<reference key="16">
    <citation type="journal article" date="2013" name="J. Hum. Genet.">
        <title>A molecular genetic analysis of childhood nephrotic syndrome in a cohort of Saudi Arabian families.</title>
        <authorList>
            <person name="Al-Hamed M.H."/>
            <person name="Al-Sabban E."/>
            <person name="Al-Mojalli H."/>
            <person name="Al-Harbi N."/>
            <person name="Faqeih E."/>
            <person name="Al Shaya H."/>
            <person name="Alhasan K."/>
            <person name="Al-Hissi S."/>
            <person name="Rajab M."/>
            <person name="Edwards N."/>
            <person name="Al-Abbad A."/>
            <person name="Al-Hassoun I."/>
            <person name="Sayer J.A."/>
            <person name="Meyer B.F."/>
        </authorList>
    </citation>
    <scope>VARIANTS FSGS6 47-TYR--ILE-1108 DEL AND ILE-119</scope>
</reference>
<reference key="17">
    <citation type="journal article" date="2015" name="J. Am. Soc. Nephrol.">
        <title>A single-gene cause in 29.5% of cases of steroid-resistant nephrotic syndrome.</title>
        <authorList>
            <consortium name="SRNS Study Group"/>
            <person name="Sadowski C.E."/>
            <person name="Lovric S."/>
            <person name="Ashraf S."/>
            <person name="Pabst W.L."/>
            <person name="Gee H.Y."/>
            <person name="Kohl S."/>
            <person name="Engelmann S."/>
            <person name="Vega-Warner V."/>
            <person name="Fang H."/>
            <person name="Halbritter J."/>
            <person name="Somers M.J."/>
            <person name="Tan W."/>
            <person name="Shril S."/>
            <person name="Fessi I."/>
            <person name="Lifton R.P."/>
            <person name="Bockenhauer D."/>
            <person name="El-Desoky S."/>
            <person name="Kari J.A."/>
            <person name="Zenker M."/>
            <person name="Kemper M.J."/>
            <person name="Mueller D."/>
            <person name="Fathy H.M."/>
            <person name="Soliman N.A."/>
            <person name="Hildebrandt F."/>
        </authorList>
    </citation>
    <scope>VARIANTS GLY-185; TRP-523 AND 660-GLN--ILE-1108 DEL</scope>
    <scope>VARIANT FSGS6 HIS-388</scope>
</reference>
<reference key="18">
    <citation type="journal article" date="2018" name="Genet. Med.">
        <title>Biallelic variants in LINGO1 are associated with autosomal recessive intellectual disability, microcephaly, speech and motor delay.</title>
        <authorList>
            <person name="Ansar M."/>
            <person name="Riazuddin S."/>
            <person name="Sarwar M.T."/>
            <person name="Makrythanasis P."/>
            <person name="Paracha S.A."/>
            <person name="Iqbal Z."/>
            <person name="Khan J."/>
            <person name="Assir M.Z."/>
            <person name="Hussain M."/>
            <person name="Razzaq A."/>
            <person name="Polla D.L."/>
            <person name="Taj A.S."/>
            <person name="Holmgren A."/>
            <person name="Batool N."/>
            <person name="Misceo D."/>
            <person name="Iwaszkiewicz J."/>
            <person name="de Brouwer A.P.M."/>
            <person name="Guipponi M."/>
            <person name="Hanquinet S."/>
            <person name="Zoete V."/>
            <person name="Santoni F.A."/>
            <person name="Frengen E."/>
            <person name="Ahmed J."/>
            <person name="Riazuddin S."/>
            <person name="van Bokhoven H."/>
            <person name="Antonarakis S.E."/>
        </authorList>
    </citation>
    <scope>VARIANT MET-469</scope>
</reference>
<reference key="19">
    <citation type="journal article" date="2022" name="J. Am. Soc. Nephrol.">
        <title>Steroid-Resistant Nephrotic Syndrome-Associated MYO1E Mutations Have Differential Effects on Myosin 1e Localization, Dynamics, and Activity.</title>
        <authorList>
            <person name="Liu P.J."/>
            <person name="Gunther L.K."/>
            <person name="Garone M.E."/>
            <person name="Zhang C."/>
            <person name="Perez D."/>
            <person name="Bi-Karchin J."/>
            <person name="Pellenz C.D."/>
            <person name="Chase S.E."/>
            <person name="Presti M.F."/>
            <person name="Plante E.L."/>
            <person name="Martin C.E."/>
            <person name="Lovric S."/>
            <person name="Yengo C.M."/>
            <person name="Hildebrandt F."/>
            <person name="Krendel M."/>
        </authorList>
    </citation>
    <scope>CHARACTERIZATION OF VARIANTS FSGS6 ILE-119 AND HIS-388</scope>
    <scope>FUNCTION</scope>
    <scope>SUBCELLULAR LOCATION</scope>
</reference>
<feature type="chain" id="PRO_0000123450" description="Unconventional myosin-Ie">
    <location>
        <begin position="1"/>
        <end position="1108"/>
    </location>
</feature>
<feature type="domain" description="Myosin motor" evidence="6">
    <location>
        <begin position="19"/>
        <end position="692"/>
    </location>
</feature>
<feature type="domain" description="IQ" evidence="4">
    <location>
        <begin position="695"/>
        <end position="724"/>
    </location>
</feature>
<feature type="domain" description="TH1" evidence="7">
    <location>
        <begin position="730"/>
        <end position="922"/>
    </location>
</feature>
<feature type="domain" description="SH3" evidence="5">
    <location>
        <begin position="1051"/>
        <end position="1108"/>
    </location>
</feature>
<feature type="region of interest" description="Actin-binding" evidence="3">
    <location>
        <begin position="581"/>
        <end position="591"/>
    </location>
</feature>
<feature type="region of interest" description="Disordered" evidence="8">
    <location>
        <begin position="919"/>
        <end position="966"/>
    </location>
</feature>
<feature type="region of interest" description="Disordered" evidence="8">
    <location>
        <begin position="993"/>
        <end position="1053"/>
    </location>
</feature>
<feature type="compositionally biased region" description="Polar residues" evidence="8">
    <location>
        <begin position="933"/>
        <end position="949"/>
    </location>
</feature>
<feature type="compositionally biased region" description="Polar residues" evidence="8">
    <location>
        <begin position="999"/>
        <end position="1013"/>
    </location>
</feature>
<feature type="compositionally biased region" description="Pro residues" evidence="8">
    <location>
        <begin position="1035"/>
        <end position="1052"/>
    </location>
</feature>
<feature type="binding site" evidence="3">
    <location>
        <begin position="112"/>
        <end position="119"/>
    </location>
    <ligand>
        <name>ATP</name>
        <dbReference type="ChEBI" id="CHEBI:30616"/>
    </ligand>
</feature>
<feature type="modified residue" description="Phosphoserine" evidence="21 22 23">
    <location>
        <position position="980"/>
    </location>
</feature>
<feature type="modified residue" description="Phosphoserine" evidence="21">
    <location>
        <position position="1002"/>
    </location>
</feature>
<feature type="sequence variant" id="VAR_087568" description="In FSGS6." evidence="16">
    <location>
        <begin position="47"/>
        <end position="1108"/>
    </location>
</feature>
<feature type="sequence variant" id="VAR_087569" description="In FSGS6; results in altered clathrin-coated vesicle dynamics when expressed in a heterolgous system; severely decreased localization to cell-cell junctions and clathrin-coated vesicles." evidence="16 19">
    <original>T</original>
    <variation>I</variation>
    <location>
        <position position="119"/>
    </location>
</feature>
<feature type="sequence variant" id="VAR_065958" description="In FSGS6; the mutant shows diffuse cytosolic localization with a punctate pattern; dbSNP:rs387906807." evidence="14 15">
    <original>A</original>
    <variation>P</variation>
    <location>
        <position position="159"/>
    </location>
</feature>
<feature type="sequence variant" id="VAR_065959" description="In dbSNP:rs141565214." evidence="15 17">
    <original>D</original>
    <variation>G</variation>
    <location>
        <position position="185"/>
    </location>
</feature>
<feature type="sequence variant" id="VAR_065960" evidence="15">
    <original>A</original>
    <variation>V</variation>
    <location>
        <position position="221"/>
    </location>
</feature>
<feature type="sequence variant" id="VAR_087570" description="In FSGS6; loss of microfilament motor activity; results in altered clathrin-coated vesicle dynamics when expressed in a heterolgous system; no effect on localization to cell-cell junctions and clathrin-coated vesicles." evidence="17 19">
    <original>D</original>
    <variation>H</variation>
    <location>
        <position position="388"/>
    </location>
</feature>
<feature type="sequence variant" id="VAR_081166" description="In dbSNP:rs1173043275." evidence="18">
    <original>T</original>
    <variation>M</variation>
    <location>
        <position position="469"/>
    </location>
</feature>
<feature type="sequence variant" id="VAR_087571" description="Found in a patient with steroid-resistant nephrotic syndrome; likely pathogenic; dbSNP:rs781347673." evidence="17">
    <original>R</original>
    <variation>W</variation>
    <location>
        <position position="523"/>
    </location>
</feature>
<feature type="sequence variant" id="VAR_087572" description="Found in a patient with steroid-resistant, minimal change nephrotic syndrome; likely pathogenic." evidence="17">
    <location>
        <begin position="660"/>
        <end position="1108"/>
    </location>
</feature>
<feature type="sequence variant" id="VAR_065961" description="In dbSNP:rs180951130." evidence="15">
    <original>G</original>
    <variation>R</variation>
    <location>
        <position position="795"/>
    </location>
</feature>
<feature type="sequence variant" id="VAR_065962" description="In dbSNP:rs147579391." evidence="15">
    <original>P</original>
    <variation>H</variation>
    <location>
        <position position="1049"/>
    </location>
</feature>
<feature type="sequence conflict" description="In Ref. 1; AAA62667." evidence="20" ref="1">
    <original>WSAG</original>
    <variation>GVQGA</variation>
    <location>
        <begin position="889"/>
        <end position="892"/>
    </location>
</feature>
<feature type="sequence conflict" description="In Ref. 1; AAA62667." evidence="20" ref="1">
    <original>N</original>
    <variation>I</variation>
    <location>
        <position position="984"/>
    </location>
</feature>
<feature type="sequence conflict" description="In Ref. 1; AAA62667." evidence="20" ref="1">
    <original>Q</original>
    <variation>P</variation>
    <location>
        <position position="1097"/>
    </location>
</feature>
<comment type="function">
    <text evidence="9 10 12 19">Actin-based motor molecule with ATPase activity (PubMed:11940582, PubMed:36316095). Unconventional myosins serve in intracellular movements. Their highly divergent tails bind to membranous compartments, which are then moved relative to actin filaments. Binds to membranes containing anionic phospholipids via its tail domain. Involved in clathrin-mediated endocytosis and intracellular movement of clathrin-coated vesicles (PubMed:36316095). Required for normal morphology of the glomerular basement membrane, normal development of foot processes by kidney podocytes and normal kidney function. In dendritic cells, may control the movement of class II-containing cytoplasmic vesicles along the actin cytoskeleton by connecting them with the actin network via ARL14EP and ARL14.</text>
</comment>
<comment type="subunit">
    <text evidence="9 10 11 13">Interacts with CALM and F-actin (PubMed:11940582). Interacts (via SH3 domain) with SYNJ1, DNM1 and DNM2 (PubMed:17257598). Interacts with ARL14EP (PubMed:21458045). Interacts with CARMIL1 (PubMed:19846667).</text>
</comment>
<comment type="interaction">
    <interactant intactId="EBI-4279548">
        <id>Q12965</id>
    </interactant>
    <interactant intactId="EBI-2807994">
        <id>Q8N8R7</id>
        <label>ARL14EP</label>
    </interactant>
    <organismsDiffer>false</organismsDiffer>
    <experiments>2</experiments>
</comment>
<comment type="interaction">
    <interactant intactId="EBI-4279548">
        <id>Q12965</id>
    </interactant>
    <interactant intactId="EBI-346547">
        <id>P50570</id>
        <label>DNM2</label>
    </interactant>
    <organismsDiffer>false</organismsDiffer>
    <experiments>2</experiments>
</comment>
<comment type="interaction">
    <interactant intactId="EBI-4279548">
        <id>Q12965</id>
    </interactant>
    <interactant intactId="EBI-80070">
        <id>P21575</id>
        <label>Dnm1</label>
    </interactant>
    <organismsDiffer>true</organismsDiffer>
    <experiments>2</experiments>
</comment>
<comment type="interaction">
    <interactant intactId="EBI-4279548">
        <id>Q12965</id>
    </interactant>
    <interactant intactId="EBI-1149123">
        <id>Q62910</id>
        <label>Synj1</label>
    </interactant>
    <organismsDiffer>true</organismsDiffer>
    <experiments>2</experiments>
</comment>
<comment type="subcellular location">
    <subcellularLocation>
        <location evidence="2">Cytoplasm</location>
    </subcellularLocation>
    <subcellularLocation>
        <location evidence="2">Cytoplasm</location>
        <location evidence="2">Cytoskeleton</location>
    </subcellularLocation>
    <subcellularLocation>
        <location evidence="2">Cytoplasmic vesicle</location>
    </subcellularLocation>
    <subcellularLocation>
        <location evidence="19">Cytoplasmic vesicle</location>
        <location evidence="19">Clathrin-coated vesicle</location>
    </subcellularLocation>
    <subcellularLocation>
        <location evidence="19">Cell junction</location>
    </subcellularLocation>
    <text evidence="1">Colocalizes with F-actin (By similarity). In cultured podocytes, it localizes close to and is associated with the cytoplasmic membrane, with enrichment at the lamellipodia tips. Colocalizes with cytoplasmic vesicles, including endocytic clathrin-coated vesicles. Colocalizes with dynamin at cytoplasmic vesicles.</text>
</comment>
<comment type="tissue specificity">
    <text evidence="13 15">Expressed in the immune system. In the kidney, predominantly expressed in the glomerulus, including podocytes.</text>
</comment>
<comment type="disease" evidence="14 15 16 17 19">
    <disease id="DI-03188">
        <name>Focal segmental glomerulosclerosis 6</name>
        <acronym>FSGS6</acronym>
        <description>A renal pathology defined by the presence of segmental sclerosis in glomeruli and resulting in proteinuria, reduced glomerular filtration rate and progressive decline in renal function. Renal insufficiency often progresses to end-stage renal disease, a highly morbid state requiring either dialysis therapy or kidney transplantation. FSGS6 is a childhood-onset disorder resulting in nephrotic syndrome, which includes massive proteinuria, hypoalbuminemia, hyperlipidemia, and edema.</description>
        <dbReference type="MIM" id="614131"/>
    </disease>
    <text>The disease is caused by variants affecting the gene represented in this entry.</text>
</comment>
<comment type="similarity">
    <text evidence="20">Belongs to the TRAFAC class myosin-kinesin ATPase superfamily. Myosin family.</text>
</comment>
<comment type="caution">
    <text evidence="20">Represents an unconventional myosin. This protein should not be confused with the conventional myosin-1 (MYH1).</text>
</comment>
<name>MYO1E_HUMAN</name>
<keyword id="KW-0009">Actin-binding</keyword>
<keyword id="KW-0067">ATP-binding</keyword>
<keyword id="KW-0112">Calmodulin-binding</keyword>
<keyword id="KW-0965">Cell junction</keyword>
<keyword id="KW-0963">Cytoplasm</keyword>
<keyword id="KW-0968">Cytoplasmic vesicle</keyword>
<keyword id="KW-0206">Cytoskeleton</keyword>
<keyword id="KW-0225">Disease variant</keyword>
<keyword id="KW-0446">Lipid-binding</keyword>
<keyword id="KW-0505">Motor protein</keyword>
<keyword id="KW-0518">Myosin</keyword>
<keyword id="KW-0547">Nucleotide-binding</keyword>
<keyword id="KW-0597">Phosphoprotein</keyword>
<keyword id="KW-1267">Proteomics identification</keyword>
<keyword id="KW-1185">Reference proteome</keyword>
<keyword id="KW-0728">SH3 domain</keyword>
<dbReference type="EMBL" id="U14391">
    <property type="protein sequence ID" value="AAA62667.1"/>
    <property type="molecule type" value="mRNA"/>
</dbReference>
<dbReference type="EMBL" id="AC092756">
    <property type="status" value="NOT_ANNOTATED_CDS"/>
    <property type="molecule type" value="Genomic_DNA"/>
</dbReference>
<dbReference type="EMBL" id="L29139">
    <property type="protein sequence ID" value="AAA20902.1"/>
    <property type="molecule type" value="mRNA"/>
</dbReference>
<dbReference type="CCDS" id="CCDS32254.1"/>
<dbReference type="PIR" id="S53601">
    <property type="entry name" value="S53601"/>
</dbReference>
<dbReference type="RefSeq" id="NP_004989.2">
    <property type="nucleotide sequence ID" value="NM_004998.4"/>
</dbReference>
<dbReference type="SMR" id="Q12965"/>
<dbReference type="BioGRID" id="110727">
    <property type="interactions" value="213"/>
</dbReference>
<dbReference type="CORUM" id="Q12965"/>
<dbReference type="DIP" id="DIP-884N"/>
<dbReference type="FunCoup" id="Q12965">
    <property type="interactions" value="648"/>
</dbReference>
<dbReference type="IntAct" id="Q12965">
    <property type="interactions" value="93"/>
</dbReference>
<dbReference type="MINT" id="Q12965"/>
<dbReference type="STRING" id="9606.ENSP00000288235"/>
<dbReference type="DrugBank" id="DB03366">
    <property type="generic name" value="Imidazole"/>
</dbReference>
<dbReference type="GlyCosmos" id="Q12965">
    <property type="glycosylation" value="1 site, 1 glycan"/>
</dbReference>
<dbReference type="GlyGen" id="Q12965">
    <property type="glycosylation" value="3 sites, 4 N-linked glycans (1 site), 2 O-linked glycans (2 sites)"/>
</dbReference>
<dbReference type="iPTMnet" id="Q12965"/>
<dbReference type="PhosphoSitePlus" id="Q12965"/>
<dbReference type="SwissPalm" id="Q12965"/>
<dbReference type="BioMuta" id="MYO1E"/>
<dbReference type="DMDM" id="215274106"/>
<dbReference type="jPOST" id="Q12965"/>
<dbReference type="MassIVE" id="Q12965"/>
<dbReference type="PaxDb" id="9606-ENSP00000288235"/>
<dbReference type="PeptideAtlas" id="Q12965"/>
<dbReference type="PRIDE" id="Q12965"/>
<dbReference type="ProteomicsDB" id="59057"/>
<dbReference type="Pumba" id="Q12965"/>
<dbReference type="Antibodypedia" id="12911">
    <property type="antibodies" value="158 antibodies from 26 providers"/>
</dbReference>
<dbReference type="DNASU" id="4643"/>
<dbReference type="Ensembl" id="ENST00000288235.9">
    <property type="protein sequence ID" value="ENSP00000288235.4"/>
    <property type="gene ID" value="ENSG00000157483.9"/>
</dbReference>
<dbReference type="GeneID" id="4643"/>
<dbReference type="KEGG" id="hsa:4643"/>
<dbReference type="MANE-Select" id="ENST00000288235.9">
    <property type="protein sequence ID" value="ENSP00000288235.4"/>
    <property type="RefSeq nucleotide sequence ID" value="NM_004998.4"/>
    <property type="RefSeq protein sequence ID" value="NP_004989.2"/>
</dbReference>
<dbReference type="AGR" id="HGNC:7599"/>
<dbReference type="CTD" id="4643"/>
<dbReference type="DisGeNET" id="4643"/>
<dbReference type="GeneCards" id="MYO1E"/>
<dbReference type="HGNC" id="HGNC:7599">
    <property type="gene designation" value="MYO1E"/>
</dbReference>
<dbReference type="HPA" id="ENSG00000157483">
    <property type="expression patterns" value="Low tissue specificity"/>
</dbReference>
<dbReference type="MalaCards" id="MYO1E"/>
<dbReference type="MIM" id="601479">
    <property type="type" value="gene"/>
</dbReference>
<dbReference type="MIM" id="614131">
    <property type="type" value="phenotype"/>
</dbReference>
<dbReference type="neXtProt" id="NX_Q12965"/>
<dbReference type="OpenTargets" id="ENSG00000157483"/>
<dbReference type="Orphanet" id="656">
    <property type="disease" value="Hereditary steroid-resistant nephrotic syndrome"/>
</dbReference>
<dbReference type="PharmGKB" id="PA31401"/>
<dbReference type="VEuPathDB" id="HostDB:ENSG00000157483"/>
<dbReference type="eggNOG" id="KOG0162">
    <property type="taxonomic scope" value="Eukaryota"/>
</dbReference>
<dbReference type="GeneTree" id="ENSGT00940000157461"/>
<dbReference type="HOGENOM" id="CLU_000192_7_6_1"/>
<dbReference type="InParanoid" id="Q12965"/>
<dbReference type="OMA" id="NDQENQC"/>
<dbReference type="OrthoDB" id="6108017at2759"/>
<dbReference type="PAN-GO" id="Q12965">
    <property type="GO annotations" value="9 GO annotations based on evolutionary models"/>
</dbReference>
<dbReference type="PhylomeDB" id="Q12965"/>
<dbReference type="TreeFam" id="TF312960"/>
<dbReference type="PathwayCommons" id="Q12965"/>
<dbReference type="SignaLink" id="Q12965"/>
<dbReference type="SIGNOR" id="Q12965"/>
<dbReference type="BioGRID-ORCS" id="4643">
    <property type="hits" value="39 hits in 1150 CRISPR screens"/>
</dbReference>
<dbReference type="CD-CODE" id="FB4E32DD">
    <property type="entry name" value="Presynaptic clusters and postsynaptic densities"/>
</dbReference>
<dbReference type="ChiTaRS" id="MYO1E">
    <property type="organism name" value="human"/>
</dbReference>
<dbReference type="GeneWiki" id="MYO1E"/>
<dbReference type="GenomeRNAi" id="4643"/>
<dbReference type="Pharos" id="Q12965">
    <property type="development level" value="Tbio"/>
</dbReference>
<dbReference type="PRO" id="PR:Q12965"/>
<dbReference type="Proteomes" id="UP000005640">
    <property type="component" value="Chromosome 15"/>
</dbReference>
<dbReference type="RNAct" id="Q12965">
    <property type="molecule type" value="protein"/>
</dbReference>
<dbReference type="Bgee" id="ENSG00000157483">
    <property type="expression patterns" value="Expressed in calcaneal tendon and 148 other cell types or tissues"/>
</dbReference>
<dbReference type="ExpressionAtlas" id="Q12965">
    <property type="expression patterns" value="baseline and differential"/>
</dbReference>
<dbReference type="GO" id="GO:0015629">
    <property type="term" value="C:actin cytoskeleton"/>
    <property type="evidence" value="ECO:0000318"/>
    <property type="project" value="GO_Central"/>
</dbReference>
<dbReference type="GO" id="GO:0005912">
    <property type="term" value="C:adherens junction"/>
    <property type="evidence" value="ECO:0000250"/>
    <property type="project" value="UniProtKB"/>
</dbReference>
<dbReference type="GO" id="GO:0005903">
    <property type="term" value="C:brush border"/>
    <property type="evidence" value="ECO:0007669"/>
    <property type="project" value="Ensembl"/>
</dbReference>
<dbReference type="GO" id="GO:0030136">
    <property type="term" value="C:clathrin-coated vesicle"/>
    <property type="evidence" value="ECO:0007669"/>
    <property type="project" value="UniProtKB-SubCell"/>
</dbReference>
<dbReference type="GO" id="GO:0005737">
    <property type="term" value="C:cytoplasm"/>
    <property type="evidence" value="ECO:0000250"/>
    <property type="project" value="UniProtKB"/>
</dbReference>
<dbReference type="GO" id="GO:0005856">
    <property type="term" value="C:cytoskeleton"/>
    <property type="evidence" value="ECO:0000314"/>
    <property type="project" value="UniProtKB"/>
</dbReference>
<dbReference type="GO" id="GO:0070062">
    <property type="term" value="C:extracellular exosome"/>
    <property type="evidence" value="ECO:0007005"/>
    <property type="project" value="UniProtKB"/>
</dbReference>
<dbReference type="GO" id="GO:0005902">
    <property type="term" value="C:microvillus"/>
    <property type="evidence" value="ECO:0000318"/>
    <property type="project" value="GO_Central"/>
</dbReference>
<dbReference type="GO" id="GO:0016459">
    <property type="term" value="C:myosin complex"/>
    <property type="evidence" value="ECO:0000304"/>
    <property type="project" value="UniProtKB"/>
</dbReference>
<dbReference type="GO" id="GO:0005886">
    <property type="term" value="C:plasma membrane"/>
    <property type="evidence" value="ECO:0000318"/>
    <property type="project" value="GO_Central"/>
</dbReference>
<dbReference type="GO" id="GO:0051015">
    <property type="term" value="F:actin filament binding"/>
    <property type="evidence" value="ECO:0000314"/>
    <property type="project" value="UniProtKB"/>
</dbReference>
<dbReference type="GO" id="GO:0005524">
    <property type="term" value="F:ATP binding"/>
    <property type="evidence" value="ECO:0007669"/>
    <property type="project" value="UniProtKB-KW"/>
</dbReference>
<dbReference type="GO" id="GO:0016887">
    <property type="term" value="F:ATP hydrolysis activity"/>
    <property type="evidence" value="ECO:0000314"/>
    <property type="project" value="UniProtKB"/>
</dbReference>
<dbReference type="GO" id="GO:0005516">
    <property type="term" value="F:calmodulin binding"/>
    <property type="evidence" value="ECO:0000314"/>
    <property type="project" value="UniProtKB"/>
</dbReference>
<dbReference type="GO" id="GO:0000146">
    <property type="term" value="F:microfilament motor activity"/>
    <property type="evidence" value="ECO:0000318"/>
    <property type="project" value="GO_Central"/>
</dbReference>
<dbReference type="GO" id="GO:0035091">
    <property type="term" value="F:phosphatidylinositol binding"/>
    <property type="evidence" value="ECO:0000314"/>
    <property type="project" value="UniProtKB"/>
</dbReference>
<dbReference type="GO" id="GO:0007015">
    <property type="term" value="P:actin filament organization"/>
    <property type="evidence" value="ECO:0000318"/>
    <property type="project" value="GO_Central"/>
</dbReference>
<dbReference type="GO" id="GO:0006897">
    <property type="term" value="P:endocytosis"/>
    <property type="evidence" value="ECO:0000315"/>
    <property type="project" value="UniProtKB"/>
</dbReference>
<dbReference type="GO" id="GO:0032836">
    <property type="term" value="P:glomerular basement membrane development"/>
    <property type="evidence" value="ECO:0000250"/>
    <property type="project" value="UniProtKB"/>
</dbReference>
<dbReference type="GO" id="GO:0003094">
    <property type="term" value="P:glomerular filtration"/>
    <property type="evidence" value="ECO:0000250"/>
    <property type="project" value="UniProtKB"/>
</dbReference>
<dbReference type="GO" id="GO:0032835">
    <property type="term" value="P:glomerulus development"/>
    <property type="evidence" value="ECO:0000318"/>
    <property type="project" value="GO_Central"/>
</dbReference>
<dbReference type="GO" id="GO:0001701">
    <property type="term" value="P:in utero embryonic development"/>
    <property type="evidence" value="ECO:0007669"/>
    <property type="project" value="Ensembl"/>
</dbReference>
<dbReference type="GO" id="GO:0048008">
    <property type="term" value="P:platelet-derived growth factor receptor signaling pathway"/>
    <property type="evidence" value="ECO:0007669"/>
    <property type="project" value="Ensembl"/>
</dbReference>
<dbReference type="GO" id="GO:0072015">
    <property type="term" value="P:podocyte development"/>
    <property type="evidence" value="ECO:0000250"/>
    <property type="project" value="UniProtKB"/>
</dbReference>
<dbReference type="GO" id="GO:0035166">
    <property type="term" value="P:post-embryonic hemopoiesis"/>
    <property type="evidence" value="ECO:0007669"/>
    <property type="project" value="Ensembl"/>
</dbReference>
<dbReference type="GO" id="GO:0001570">
    <property type="term" value="P:vasculogenesis"/>
    <property type="evidence" value="ECO:0007669"/>
    <property type="project" value="Ensembl"/>
</dbReference>
<dbReference type="CDD" id="cd01378">
    <property type="entry name" value="MYSc_Myo1"/>
    <property type="match status" value="1"/>
</dbReference>
<dbReference type="CDD" id="cd11827">
    <property type="entry name" value="SH3_MyoIe_If_like"/>
    <property type="match status" value="1"/>
</dbReference>
<dbReference type="FunFam" id="1.10.10.820:FF:000001">
    <property type="entry name" value="Myosin heavy chain"/>
    <property type="match status" value="1"/>
</dbReference>
<dbReference type="FunFam" id="1.20.5.4820:FF:000004">
    <property type="entry name" value="Myosin IE"/>
    <property type="match status" value="1"/>
</dbReference>
<dbReference type="FunFam" id="1.20.58.530:FF:000007">
    <property type="entry name" value="Myosin IE"/>
    <property type="match status" value="1"/>
</dbReference>
<dbReference type="FunFam" id="3.40.850.10:FF:000101">
    <property type="entry name" value="Slow myosin heavy chain 2"/>
    <property type="match status" value="1"/>
</dbReference>
<dbReference type="FunFam" id="2.30.30.40:FF:000072">
    <property type="entry name" value="Unconventional Myosin IB"/>
    <property type="match status" value="1"/>
</dbReference>
<dbReference type="FunFam" id="1.20.120.720:FF:000010">
    <property type="entry name" value="Unconventional myosin-Ie"/>
    <property type="match status" value="1"/>
</dbReference>
<dbReference type="Gene3D" id="1.10.10.820">
    <property type="match status" value="1"/>
</dbReference>
<dbReference type="Gene3D" id="1.20.5.4820">
    <property type="match status" value="1"/>
</dbReference>
<dbReference type="Gene3D" id="1.20.58.530">
    <property type="match status" value="1"/>
</dbReference>
<dbReference type="Gene3D" id="3.40.850.10">
    <property type="entry name" value="Kinesin motor domain"/>
    <property type="match status" value="1"/>
</dbReference>
<dbReference type="Gene3D" id="1.20.120.720">
    <property type="entry name" value="Myosin VI head, motor domain, U50 subdomain"/>
    <property type="match status" value="1"/>
</dbReference>
<dbReference type="Gene3D" id="2.30.30.40">
    <property type="entry name" value="SH3 Domains"/>
    <property type="match status" value="1"/>
</dbReference>
<dbReference type="InterPro" id="IPR035507">
    <property type="entry name" value="Ie/If_SH3"/>
</dbReference>
<dbReference type="InterPro" id="IPR036961">
    <property type="entry name" value="Kinesin_motor_dom_sf"/>
</dbReference>
<dbReference type="InterPro" id="IPR001609">
    <property type="entry name" value="Myosin_head_motor_dom-like"/>
</dbReference>
<dbReference type="InterPro" id="IPR010926">
    <property type="entry name" value="Myosin_TH1"/>
</dbReference>
<dbReference type="InterPro" id="IPR036072">
    <property type="entry name" value="MYSc_Myo1"/>
</dbReference>
<dbReference type="InterPro" id="IPR027417">
    <property type="entry name" value="P-loop_NTPase"/>
</dbReference>
<dbReference type="InterPro" id="IPR036028">
    <property type="entry name" value="SH3-like_dom_sf"/>
</dbReference>
<dbReference type="InterPro" id="IPR001452">
    <property type="entry name" value="SH3_domain"/>
</dbReference>
<dbReference type="PANTHER" id="PTHR13140">
    <property type="entry name" value="MYOSIN"/>
    <property type="match status" value="1"/>
</dbReference>
<dbReference type="PANTHER" id="PTHR13140:SF341">
    <property type="entry name" value="UNCONVENTIONAL MYOSIN-IE"/>
    <property type="match status" value="1"/>
</dbReference>
<dbReference type="Pfam" id="PF00063">
    <property type="entry name" value="Myosin_head"/>
    <property type="match status" value="1"/>
</dbReference>
<dbReference type="Pfam" id="PF06017">
    <property type="entry name" value="Myosin_TH1"/>
    <property type="match status" value="1"/>
</dbReference>
<dbReference type="Pfam" id="PF00018">
    <property type="entry name" value="SH3_1"/>
    <property type="match status" value="1"/>
</dbReference>
<dbReference type="PRINTS" id="PR00193">
    <property type="entry name" value="MYOSINHEAVY"/>
</dbReference>
<dbReference type="PRINTS" id="PR00452">
    <property type="entry name" value="SH3DOMAIN"/>
</dbReference>
<dbReference type="SMART" id="SM00242">
    <property type="entry name" value="MYSc"/>
    <property type="match status" value="1"/>
</dbReference>
<dbReference type="SMART" id="SM00326">
    <property type="entry name" value="SH3"/>
    <property type="match status" value="1"/>
</dbReference>
<dbReference type="SUPFAM" id="SSF52540">
    <property type="entry name" value="P-loop containing nucleoside triphosphate hydrolases"/>
    <property type="match status" value="1"/>
</dbReference>
<dbReference type="SUPFAM" id="SSF50044">
    <property type="entry name" value="SH3-domain"/>
    <property type="match status" value="1"/>
</dbReference>
<dbReference type="PROSITE" id="PS50096">
    <property type="entry name" value="IQ"/>
    <property type="match status" value="1"/>
</dbReference>
<dbReference type="PROSITE" id="PS51456">
    <property type="entry name" value="MYOSIN_MOTOR"/>
    <property type="match status" value="1"/>
</dbReference>
<dbReference type="PROSITE" id="PS50002">
    <property type="entry name" value="SH3"/>
    <property type="match status" value="1"/>
</dbReference>
<dbReference type="PROSITE" id="PS51757">
    <property type="entry name" value="TH1"/>
    <property type="match status" value="1"/>
</dbReference>
<organism>
    <name type="scientific">Homo sapiens</name>
    <name type="common">Human</name>
    <dbReference type="NCBI Taxonomy" id="9606"/>
    <lineage>
        <taxon>Eukaryota</taxon>
        <taxon>Metazoa</taxon>
        <taxon>Chordata</taxon>
        <taxon>Craniata</taxon>
        <taxon>Vertebrata</taxon>
        <taxon>Euteleostomi</taxon>
        <taxon>Mammalia</taxon>
        <taxon>Eutheria</taxon>
        <taxon>Euarchontoglires</taxon>
        <taxon>Primates</taxon>
        <taxon>Haplorrhini</taxon>
        <taxon>Catarrhini</taxon>
        <taxon>Hominidae</taxon>
        <taxon>Homo</taxon>
    </lineage>
</organism>